<dbReference type="EMBL" id="AJ965256">
    <property type="protein sequence ID" value="CAI82649.1"/>
    <property type="molecule type" value="Genomic_DNA"/>
</dbReference>
<dbReference type="RefSeq" id="WP_011309006.1">
    <property type="nucleotide sequence ID" value="NC_007356.1"/>
</dbReference>
<dbReference type="SMR" id="Q3ZZL4"/>
<dbReference type="KEGG" id="deh:cbdbA449"/>
<dbReference type="HOGENOM" id="CLU_095071_2_1_0"/>
<dbReference type="Proteomes" id="UP000000433">
    <property type="component" value="Chromosome"/>
</dbReference>
<dbReference type="GO" id="GO:0022625">
    <property type="term" value="C:cytosolic large ribosomal subunit"/>
    <property type="evidence" value="ECO:0007669"/>
    <property type="project" value="TreeGrafter"/>
</dbReference>
<dbReference type="GO" id="GO:0070180">
    <property type="term" value="F:large ribosomal subunit rRNA binding"/>
    <property type="evidence" value="ECO:0007669"/>
    <property type="project" value="TreeGrafter"/>
</dbReference>
<dbReference type="GO" id="GO:0003735">
    <property type="term" value="F:structural constituent of ribosome"/>
    <property type="evidence" value="ECO:0007669"/>
    <property type="project" value="InterPro"/>
</dbReference>
<dbReference type="GO" id="GO:0006412">
    <property type="term" value="P:translation"/>
    <property type="evidence" value="ECO:0007669"/>
    <property type="project" value="UniProtKB-UniRule"/>
</dbReference>
<dbReference type="CDD" id="cd00337">
    <property type="entry name" value="Ribosomal_uL14"/>
    <property type="match status" value="1"/>
</dbReference>
<dbReference type="FunFam" id="2.40.150.20:FF:000001">
    <property type="entry name" value="50S ribosomal protein L14"/>
    <property type="match status" value="1"/>
</dbReference>
<dbReference type="Gene3D" id="2.40.150.20">
    <property type="entry name" value="Ribosomal protein L14"/>
    <property type="match status" value="1"/>
</dbReference>
<dbReference type="HAMAP" id="MF_01367">
    <property type="entry name" value="Ribosomal_uL14"/>
    <property type="match status" value="1"/>
</dbReference>
<dbReference type="InterPro" id="IPR000218">
    <property type="entry name" value="Ribosomal_uL14"/>
</dbReference>
<dbReference type="InterPro" id="IPR005745">
    <property type="entry name" value="Ribosomal_uL14_bac-type"/>
</dbReference>
<dbReference type="InterPro" id="IPR019972">
    <property type="entry name" value="Ribosomal_uL14_CS"/>
</dbReference>
<dbReference type="InterPro" id="IPR036853">
    <property type="entry name" value="Ribosomal_uL14_sf"/>
</dbReference>
<dbReference type="NCBIfam" id="TIGR01067">
    <property type="entry name" value="rplN_bact"/>
    <property type="match status" value="1"/>
</dbReference>
<dbReference type="PANTHER" id="PTHR11761">
    <property type="entry name" value="50S/60S RIBOSOMAL PROTEIN L14/L23"/>
    <property type="match status" value="1"/>
</dbReference>
<dbReference type="PANTHER" id="PTHR11761:SF3">
    <property type="entry name" value="LARGE RIBOSOMAL SUBUNIT PROTEIN UL14M"/>
    <property type="match status" value="1"/>
</dbReference>
<dbReference type="Pfam" id="PF00238">
    <property type="entry name" value="Ribosomal_L14"/>
    <property type="match status" value="1"/>
</dbReference>
<dbReference type="SMART" id="SM01374">
    <property type="entry name" value="Ribosomal_L14"/>
    <property type="match status" value="1"/>
</dbReference>
<dbReference type="SUPFAM" id="SSF50193">
    <property type="entry name" value="Ribosomal protein L14"/>
    <property type="match status" value="1"/>
</dbReference>
<dbReference type="PROSITE" id="PS00049">
    <property type="entry name" value="RIBOSOMAL_L14"/>
    <property type="match status" value="1"/>
</dbReference>
<organism>
    <name type="scientific">Dehalococcoides mccartyi (strain CBDB1)</name>
    <dbReference type="NCBI Taxonomy" id="255470"/>
    <lineage>
        <taxon>Bacteria</taxon>
        <taxon>Bacillati</taxon>
        <taxon>Chloroflexota</taxon>
        <taxon>Dehalococcoidia</taxon>
        <taxon>Dehalococcoidales</taxon>
        <taxon>Dehalococcoidaceae</taxon>
        <taxon>Dehalococcoides</taxon>
    </lineage>
</organism>
<proteinExistence type="inferred from homology"/>
<feature type="chain" id="PRO_1000055571" description="Large ribosomal subunit protein uL14">
    <location>
        <begin position="1"/>
        <end position="122"/>
    </location>
</feature>
<comment type="function">
    <text evidence="1">Binds to 23S rRNA. Forms part of two intersubunit bridges in the 70S ribosome.</text>
</comment>
<comment type="subunit">
    <text evidence="1">Part of the 50S ribosomal subunit. Forms a cluster with proteins L3 and L19. In the 70S ribosome, L14 and L19 interact and together make contacts with the 16S rRNA in bridges B5 and B8.</text>
</comment>
<comment type="similarity">
    <text evidence="1">Belongs to the universal ribosomal protein uL14 family.</text>
</comment>
<protein>
    <recommendedName>
        <fullName evidence="1">Large ribosomal subunit protein uL14</fullName>
    </recommendedName>
    <alternativeName>
        <fullName evidence="2">50S ribosomal protein L14</fullName>
    </alternativeName>
</protein>
<reference key="1">
    <citation type="journal article" date="2005" name="Nat. Biotechnol.">
        <title>Genome sequence of the chlorinated compound-respiring bacterium Dehalococcoides species strain CBDB1.</title>
        <authorList>
            <person name="Kube M."/>
            <person name="Beck A."/>
            <person name="Zinder S.H."/>
            <person name="Kuhl H."/>
            <person name="Reinhardt R."/>
            <person name="Adrian L."/>
        </authorList>
    </citation>
    <scope>NUCLEOTIDE SEQUENCE [LARGE SCALE GENOMIC DNA]</scope>
    <source>
        <strain>CBDB1</strain>
    </source>
</reference>
<accession>Q3ZZL4</accession>
<gene>
    <name evidence="1" type="primary">rplN</name>
    <name type="ordered locus">cbdbA449</name>
</gene>
<name>RL14_DEHMC</name>
<keyword id="KW-0687">Ribonucleoprotein</keyword>
<keyword id="KW-0689">Ribosomal protein</keyword>
<keyword id="KW-0694">RNA-binding</keyword>
<keyword id="KW-0699">rRNA-binding</keyword>
<sequence length="122" mass="13224">MVQQYTRLNVADNTGAKKIMCINVLGGSHKIQAKVGDVIVAAVKKSSPDAQAKSGTVVKAVVVRITKPYARPDGSYIKFDDNAAVILNDKMEPKGTRIFGPVARELRDKKFTKILSLAPEVL</sequence>
<evidence type="ECO:0000255" key="1">
    <source>
        <dbReference type="HAMAP-Rule" id="MF_01367"/>
    </source>
</evidence>
<evidence type="ECO:0000305" key="2"/>